<organism>
    <name type="scientific">Saccharolobus islandicus (strain M.16.4 / Kamchatka #3)</name>
    <name type="common">Sulfolobus islandicus</name>
    <dbReference type="NCBI Taxonomy" id="426118"/>
    <lineage>
        <taxon>Archaea</taxon>
        <taxon>Thermoproteota</taxon>
        <taxon>Thermoprotei</taxon>
        <taxon>Sulfolobales</taxon>
        <taxon>Sulfolobaceae</taxon>
        <taxon>Saccharolobus</taxon>
    </lineage>
</organism>
<gene>
    <name evidence="1" type="primary">pfdB</name>
    <name type="ordered locus">M164_1405</name>
</gene>
<reference key="1">
    <citation type="journal article" date="2009" name="Proc. Natl. Acad. Sci. U.S.A.">
        <title>Biogeography of the Sulfolobus islandicus pan-genome.</title>
        <authorList>
            <person name="Reno M.L."/>
            <person name="Held N.L."/>
            <person name="Fields C.J."/>
            <person name="Burke P.V."/>
            <person name="Whitaker R.J."/>
        </authorList>
    </citation>
    <scope>NUCLEOTIDE SEQUENCE [LARGE SCALE GENOMIC DNA]</scope>
    <source>
        <strain>M.16.4 / Kamchatka #3</strain>
    </source>
</reference>
<feature type="chain" id="PRO_1000205019" description="Prefoldin subunit beta">
    <location>
        <begin position="1"/>
        <end position="126"/>
    </location>
</feature>
<sequence>MAEKLPPEVQAQLAKFQQLKDQLDRLLLEKSTIENELREINKVLEELSVLNADATIYKIVGNLLVKSDKTSVEKELNDRKELLELRSRTYQKQESILRKQLEDLQAKINEMLSKYYPQGGQTGIKA</sequence>
<name>PFDB_SACI6</name>
<dbReference type="EMBL" id="CP001402">
    <property type="protein sequence ID" value="ACR42011.1"/>
    <property type="molecule type" value="Genomic_DNA"/>
</dbReference>
<dbReference type="RefSeq" id="WP_012711409.1">
    <property type="nucleotide sequence ID" value="NC_012726.1"/>
</dbReference>
<dbReference type="SMR" id="C4KHE7"/>
<dbReference type="KEGG" id="sid:M164_1405"/>
<dbReference type="HOGENOM" id="CLU_131909_2_1_2"/>
<dbReference type="Proteomes" id="UP000001479">
    <property type="component" value="Chromosome"/>
</dbReference>
<dbReference type="GO" id="GO:0005737">
    <property type="term" value="C:cytoplasm"/>
    <property type="evidence" value="ECO:0007669"/>
    <property type="project" value="UniProtKB-SubCell"/>
</dbReference>
<dbReference type="GO" id="GO:0016272">
    <property type="term" value="C:prefoldin complex"/>
    <property type="evidence" value="ECO:0007669"/>
    <property type="project" value="UniProtKB-UniRule"/>
</dbReference>
<dbReference type="GO" id="GO:0051087">
    <property type="term" value="F:protein-folding chaperone binding"/>
    <property type="evidence" value="ECO:0007669"/>
    <property type="project" value="TreeGrafter"/>
</dbReference>
<dbReference type="GO" id="GO:0051082">
    <property type="term" value="F:unfolded protein binding"/>
    <property type="evidence" value="ECO:0007669"/>
    <property type="project" value="UniProtKB-UniRule"/>
</dbReference>
<dbReference type="GO" id="GO:0051131">
    <property type="term" value="P:chaperone-mediated protein complex assembly"/>
    <property type="evidence" value="ECO:0007669"/>
    <property type="project" value="TreeGrafter"/>
</dbReference>
<dbReference type="GO" id="GO:0006457">
    <property type="term" value="P:protein folding"/>
    <property type="evidence" value="ECO:0007669"/>
    <property type="project" value="UniProtKB-UniRule"/>
</dbReference>
<dbReference type="CDD" id="cd23162">
    <property type="entry name" value="Prefoldin_beta_GimC"/>
    <property type="match status" value="1"/>
</dbReference>
<dbReference type="FunFam" id="1.10.287.370:FF:000013">
    <property type="entry name" value="Prefoldin subunit beta"/>
    <property type="match status" value="1"/>
</dbReference>
<dbReference type="Gene3D" id="1.10.287.370">
    <property type="match status" value="1"/>
</dbReference>
<dbReference type="HAMAP" id="MF_00307">
    <property type="entry name" value="PfdB"/>
    <property type="match status" value="1"/>
</dbReference>
<dbReference type="InterPro" id="IPR002777">
    <property type="entry name" value="PFD_beta-like"/>
</dbReference>
<dbReference type="InterPro" id="IPR012713">
    <property type="entry name" value="PfdB"/>
</dbReference>
<dbReference type="InterPro" id="IPR009053">
    <property type="entry name" value="Prefoldin"/>
</dbReference>
<dbReference type="NCBIfam" id="TIGR02338">
    <property type="entry name" value="gimC_beta"/>
    <property type="match status" value="1"/>
</dbReference>
<dbReference type="PANTHER" id="PTHR21431">
    <property type="entry name" value="PREFOLDIN SUBUNIT 6"/>
    <property type="match status" value="1"/>
</dbReference>
<dbReference type="PANTHER" id="PTHR21431:SF0">
    <property type="entry name" value="PREFOLDIN SUBUNIT 6"/>
    <property type="match status" value="1"/>
</dbReference>
<dbReference type="Pfam" id="PF01920">
    <property type="entry name" value="Prefoldin_2"/>
    <property type="match status" value="1"/>
</dbReference>
<dbReference type="SUPFAM" id="SSF46579">
    <property type="entry name" value="Prefoldin"/>
    <property type="match status" value="1"/>
</dbReference>
<evidence type="ECO:0000255" key="1">
    <source>
        <dbReference type="HAMAP-Rule" id="MF_00307"/>
    </source>
</evidence>
<proteinExistence type="inferred from homology"/>
<keyword id="KW-0143">Chaperone</keyword>
<keyword id="KW-0963">Cytoplasm</keyword>
<accession>C4KHE7</accession>
<protein>
    <recommendedName>
        <fullName evidence="1">Prefoldin subunit beta</fullName>
    </recommendedName>
    <alternativeName>
        <fullName evidence="1">GimC subunit beta</fullName>
    </alternativeName>
</protein>
<comment type="function">
    <text evidence="1">Molecular chaperone capable of stabilizing a range of proteins. Seems to fulfill an ATP-independent, HSP70-like function in archaeal de novo protein folding.</text>
</comment>
<comment type="subunit">
    <text evidence="1">Heterohexamer of two alpha and four beta subunits.</text>
</comment>
<comment type="subcellular location">
    <subcellularLocation>
        <location evidence="1">Cytoplasm</location>
    </subcellularLocation>
</comment>
<comment type="similarity">
    <text evidence="1">Belongs to the prefoldin subunit beta family.</text>
</comment>